<protein>
    <recommendedName>
        <fullName evidence="1">Deoxyguanosinetriphosphate triphosphohydrolase-like protein</fullName>
    </recommendedName>
</protein>
<accession>Q927I2</accession>
<sequence>MKWDKLLNDKRRRESGVTRSKNTDVRSAFENDFQRIVMSASFRRLQDKTQVFPLEKSDFVRTRLTHSMEVSTIAKSMGNMVTHTIQEEKLDQDFTKDHADKIPEILACAGLLHDMGNPPFGHFGEESIREWFRDNLATITYKNKSLAEILTPQMKEDFYYFEGNAQVLRVVSKLHYLFDQYGLNLTFATLNAVIKYPVSSLKVNKKQIKSKKLGYFYADESLFNEITTATEALDNRHPLTYLLEVADDIAYLNADLEDGVKKGIVNITQILKGFEEVEEHNKVTAACYNELKKKSERYEGQEESFIVQQWLASNVRGQLINRSLEVFYENYDAIMAGTFNDSLIDASSAEQLVQILQSLSFTYIYQDKGIVESEIAGNEIISKLLETFIPAVIYYDSETPERQTAKDKRLLTLISDNYLGCYRKNAEGESETMKLYLRLLLVTDFICGMTDSYAKDLYQRLNGLS</sequence>
<keyword id="KW-0378">Hydrolase</keyword>
<gene>
    <name type="ordered locus">lin2806</name>
</gene>
<comment type="similarity">
    <text evidence="1">Belongs to the dGTPase family. Type 3 subfamily.</text>
</comment>
<feature type="chain" id="PRO_0000205330" description="Deoxyguanosinetriphosphate triphosphohydrolase-like protein">
    <location>
        <begin position="1"/>
        <end position="465"/>
    </location>
</feature>
<feature type="domain" description="HD" evidence="2">
    <location>
        <begin position="63"/>
        <end position="252"/>
    </location>
</feature>
<feature type="region of interest" description="Disordered" evidence="3">
    <location>
        <begin position="1"/>
        <end position="22"/>
    </location>
</feature>
<name>DGTL2_LISIN</name>
<reference key="1">
    <citation type="journal article" date="2001" name="Science">
        <title>Comparative genomics of Listeria species.</title>
        <authorList>
            <person name="Glaser P."/>
            <person name="Frangeul L."/>
            <person name="Buchrieser C."/>
            <person name="Rusniok C."/>
            <person name="Amend A."/>
            <person name="Baquero F."/>
            <person name="Berche P."/>
            <person name="Bloecker H."/>
            <person name="Brandt P."/>
            <person name="Chakraborty T."/>
            <person name="Charbit A."/>
            <person name="Chetouani F."/>
            <person name="Couve E."/>
            <person name="de Daruvar A."/>
            <person name="Dehoux P."/>
            <person name="Domann E."/>
            <person name="Dominguez-Bernal G."/>
            <person name="Duchaud E."/>
            <person name="Durant L."/>
            <person name="Dussurget O."/>
            <person name="Entian K.-D."/>
            <person name="Fsihi H."/>
            <person name="Garcia-del Portillo F."/>
            <person name="Garrido P."/>
            <person name="Gautier L."/>
            <person name="Goebel W."/>
            <person name="Gomez-Lopez N."/>
            <person name="Hain T."/>
            <person name="Hauf J."/>
            <person name="Jackson D."/>
            <person name="Jones L.-M."/>
            <person name="Kaerst U."/>
            <person name="Kreft J."/>
            <person name="Kuhn M."/>
            <person name="Kunst F."/>
            <person name="Kurapkat G."/>
            <person name="Madueno E."/>
            <person name="Maitournam A."/>
            <person name="Mata Vicente J."/>
            <person name="Ng E."/>
            <person name="Nedjari H."/>
            <person name="Nordsiek G."/>
            <person name="Novella S."/>
            <person name="de Pablos B."/>
            <person name="Perez-Diaz J.-C."/>
            <person name="Purcell R."/>
            <person name="Remmel B."/>
            <person name="Rose M."/>
            <person name="Schlueter T."/>
            <person name="Simoes N."/>
            <person name="Tierrez A."/>
            <person name="Vazquez-Boland J.-A."/>
            <person name="Voss H."/>
            <person name="Wehland J."/>
            <person name="Cossart P."/>
        </authorList>
    </citation>
    <scope>NUCLEOTIDE SEQUENCE [LARGE SCALE GENOMIC DNA]</scope>
    <source>
        <strain>ATCC BAA-680 / CLIP 11262</strain>
    </source>
</reference>
<organism>
    <name type="scientific">Listeria innocua serovar 6a (strain ATCC BAA-680 / CLIP 11262)</name>
    <dbReference type="NCBI Taxonomy" id="272626"/>
    <lineage>
        <taxon>Bacteria</taxon>
        <taxon>Bacillati</taxon>
        <taxon>Bacillota</taxon>
        <taxon>Bacilli</taxon>
        <taxon>Bacillales</taxon>
        <taxon>Listeriaceae</taxon>
        <taxon>Listeria</taxon>
    </lineage>
</organism>
<proteinExistence type="inferred from homology"/>
<dbReference type="EMBL" id="AL596173">
    <property type="protein sequence ID" value="CAC98032.1"/>
    <property type="molecule type" value="Genomic_DNA"/>
</dbReference>
<dbReference type="PIR" id="AH1782">
    <property type="entry name" value="AH1782"/>
</dbReference>
<dbReference type="RefSeq" id="WP_003772902.1">
    <property type="nucleotide sequence ID" value="NC_003212.1"/>
</dbReference>
<dbReference type="SMR" id="Q927I2"/>
<dbReference type="STRING" id="272626.gene:17567193"/>
<dbReference type="KEGG" id="lin:lin2806"/>
<dbReference type="eggNOG" id="COG0232">
    <property type="taxonomic scope" value="Bacteria"/>
</dbReference>
<dbReference type="HOGENOM" id="CLU_028163_2_0_9"/>
<dbReference type="OrthoDB" id="9803619at2"/>
<dbReference type="Proteomes" id="UP000002513">
    <property type="component" value="Chromosome"/>
</dbReference>
<dbReference type="GO" id="GO:0008832">
    <property type="term" value="F:dGTPase activity"/>
    <property type="evidence" value="ECO:0007669"/>
    <property type="project" value="TreeGrafter"/>
</dbReference>
<dbReference type="GO" id="GO:0006203">
    <property type="term" value="P:dGTP catabolic process"/>
    <property type="evidence" value="ECO:0007669"/>
    <property type="project" value="TreeGrafter"/>
</dbReference>
<dbReference type="CDD" id="cd00077">
    <property type="entry name" value="HDc"/>
    <property type="match status" value="1"/>
</dbReference>
<dbReference type="Gene3D" id="1.10.3550.10">
    <property type="entry name" value="eoxyguanosinetriphosphate triphosphohydrolase domain-like"/>
    <property type="match status" value="1"/>
</dbReference>
<dbReference type="Gene3D" id="1.10.3210.10">
    <property type="entry name" value="Hypothetical protein af1432"/>
    <property type="match status" value="1"/>
</dbReference>
<dbReference type="Gene3D" id="1.10.3410.10">
    <property type="entry name" value="putative deoxyguanosinetriphosphate triphosphohydrolase like domain"/>
    <property type="match status" value="1"/>
</dbReference>
<dbReference type="HAMAP" id="MF_01213">
    <property type="entry name" value="dGTPase_type3"/>
    <property type="match status" value="1"/>
</dbReference>
<dbReference type="InterPro" id="IPR023293">
    <property type="entry name" value="dGTP_triP_hydro_central_sf"/>
</dbReference>
<dbReference type="InterPro" id="IPR027432">
    <property type="entry name" value="dGTP_triphosphohydrolase_C"/>
</dbReference>
<dbReference type="InterPro" id="IPR006261">
    <property type="entry name" value="dGTPase"/>
</dbReference>
<dbReference type="InterPro" id="IPR050135">
    <property type="entry name" value="dGTPase-like"/>
</dbReference>
<dbReference type="InterPro" id="IPR023024">
    <property type="entry name" value="dNTPase_3"/>
</dbReference>
<dbReference type="InterPro" id="IPR003607">
    <property type="entry name" value="HD/PDEase_dom"/>
</dbReference>
<dbReference type="InterPro" id="IPR006674">
    <property type="entry name" value="HD_domain"/>
</dbReference>
<dbReference type="NCBIfam" id="TIGR01353">
    <property type="entry name" value="dGTP_triPase"/>
    <property type="match status" value="1"/>
</dbReference>
<dbReference type="NCBIfam" id="NF002205">
    <property type="entry name" value="PRK01096.1"/>
    <property type="match status" value="1"/>
</dbReference>
<dbReference type="PANTHER" id="PTHR11373:SF32">
    <property type="entry name" value="DEOXYGUANOSINETRIPHOSPHATE TRIPHOSPHOHYDROLASE"/>
    <property type="match status" value="1"/>
</dbReference>
<dbReference type="PANTHER" id="PTHR11373">
    <property type="entry name" value="DEOXYNUCLEOSIDE TRIPHOSPHATE TRIPHOSPHOHYDROLASE"/>
    <property type="match status" value="1"/>
</dbReference>
<dbReference type="Pfam" id="PF01966">
    <property type="entry name" value="HD"/>
    <property type="match status" value="1"/>
</dbReference>
<dbReference type="SMART" id="SM00471">
    <property type="entry name" value="HDc"/>
    <property type="match status" value="1"/>
</dbReference>
<dbReference type="SUPFAM" id="SSF109604">
    <property type="entry name" value="HD-domain/PDEase-like"/>
    <property type="match status" value="1"/>
</dbReference>
<dbReference type="PROSITE" id="PS51831">
    <property type="entry name" value="HD"/>
    <property type="match status" value="1"/>
</dbReference>
<evidence type="ECO:0000255" key="1">
    <source>
        <dbReference type="HAMAP-Rule" id="MF_01213"/>
    </source>
</evidence>
<evidence type="ECO:0000255" key="2">
    <source>
        <dbReference type="PROSITE-ProRule" id="PRU01175"/>
    </source>
</evidence>
<evidence type="ECO:0000256" key="3">
    <source>
        <dbReference type="SAM" id="MobiDB-lite"/>
    </source>
</evidence>